<dbReference type="EC" id="2.7.13.3" evidence="1"/>
<dbReference type="EMBL" id="CP000806">
    <property type="protein sequence ID" value="ACB51101.1"/>
    <property type="molecule type" value="Genomic_DNA"/>
</dbReference>
<dbReference type="RefSeq" id="WP_009545566.1">
    <property type="nucleotide sequence ID" value="NC_010546.1"/>
</dbReference>
<dbReference type="SMR" id="B1WYT4"/>
<dbReference type="STRING" id="43989.cce_1751"/>
<dbReference type="KEGG" id="cyt:cce_1751"/>
<dbReference type="eggNOG" id="COG2205">
    <property type="taxonomic scope" value="Bacteria"/>
</dbReference>
<dbReference type="HOGENOM" id="CLU_723030_0_0_3"/>
<dbReference type="OrthoDB" id="9773956at2"/>
<dbReference type="Proteomes" id="UP000001203">
    <property type="component" value="Chromosome circular"/>
</dbReference>
<dbReference type="GO" id="GO:0005524">
    <property type="term" value="F:ATP binding"/>
    <property type="evidence" value="ECO:0007669"/>
    <property type="project" value="UniProtKB-KW"/>
</dbReference>
<dbReference type="GO" id="GO:0000155">
    <property type="term" value="F:phosphorelay sensor kinase activity"/>
    <property type="evidence" value="ECO:0007669"/>
    <property type="project" value="InterPro"/>
</dbReference>
<dbReference type="GO" id="GO:0007623">
    <property type="term" value="P:circadian rhythm"/>
    <property type="evidence" value="ECO:0007669"/>
    <property type="project" value="UniProtKB-UniRule"/>
</dbReference>
<dbReference type="CDD" id="cd00075">
    <property type="entry name" value="HATPase"/>
    <property type="match status" value="1"/>
</dbReference>
<dbReference type="CDD" id="cd00082">
    <property type="entry name" value="HisKA"/>
    <property type="match status" value="1"/>
</dbReference>
<dbReference type="CDD" id="cd02978">
    <property type="entry name" value="KaiB_like"/>
    <property type="match status" value="1"/>
</dbReference>
<dbReference type="FunFam" id="1.10.287.130:FF:000154">
    <property type="entry name" value="Adaptive-response sensory kinase"/>
    <property type="match status" value="1"/>
</dbReference>
<dbReference type="FunFam" id="3.30.565.10:FF:000006">
    <property type="entry name" value="Sensor histidine kinase WalK"/>
    <property type="match status" value="1"/>
</dbReference>
<dbReference type="Gene3D" id="1.10.287.130">
    <property type="match status" value="1"/>
</dbReference>
<dbReference type="Gene3D" id="3.40.30.10">
    <property type="entry name" value="Glutaredoxin"/>
    <property type="match status" value="1"/>
</dbReference>
<dbReference type="Gene3D" id="3.30.565.10">
    <property type="entry name" value="Histidine kinase-like ATPase, C-terminal domain"/>
    <property type="match status" value="1"/>
</dbReference>
<dbReference type="HAMAP" id="MF_01837">
    <property type="entry name" value="Kinase_SasA"/>
    <property type="match status" value="1"/>
</dbReference>
<dbReference type="InterPro" id="IPR036890">
    <property type="entry name" value="HATPase_C_sf"/>
</dbReference>
<dbReference type="InterPro" id="IPR005467">
    <property type="entry name" value="His_kinase_dom"/>
</dbReference>
<dbReference type="InterPro" id="IPR003661">
    <property type="entry name" value="HisK_dim/P_dom"/>
</dbReference>
<dbReference type="InterPro" id="IPR036097">
    <property type="entry name" value="HisK_dim/P_sf"/>
</dbReference>
<dbReference type="InterPro" id="IPR011649">
    <property type="entry name" value="KaiB_domain"/>
</dbReference>
<dbReference type="InterPro" id="IPR023527">
    <property type="entry name" value="Kinase_SasA"/>
</dbReference>
<dbReference type="InterPro" id="IPR050736">
    <property type="entry name" value="Sensor_HK_Regulatory"/>
</dbReference>
<dbReference type="InterPro" id="IPR004358">
    <property type="entry name" value="Sig_transdc_His_kin-like_C"/>
</dbReference>
<dbReference type="InterPro" id="IPR036249">
    <property type="entry name" value="Thioredoxin-like_sf"/>
</dbReference>
<dbReference type="NCBIfam" id="NF006800">
    <property type="entry name" value="PRK09303.1"/>
    <property type="match status" value="1"/>
</dbReference>
<dbReference type="PANTHER" id="PTHR43711:SF26">
    <property type="entry name" value="SENSOR HISTIDINE KINASE RCSC"/>
    <property type="match status" value="1"/>
</dbReference>
<dbReference type="PANTHER" id="PTHR43711">
    <property type="entry name" value="TWO-COMPONENT HISTIDINE KINASE"/>
    <property type="match status" value="1"/>
</dbReference>
<dbReference type="Pfam" id="PF02518">
    <property type="entry name" value="HATPase_c"/>
    <property type="match status" value="1"/>
</dbReference>
<dbReference type="Pfam" id="PF00512">
    <property type="entry name" value="HisKA"/>
    <property type="match status" value="1"/>
</dbReference>
<dbReference type="Pfam" id="PF07689">
    <property type="entry name" value="KaiB"/>
    <property type="match status" value="1"/>
</dbReference>
<dbReference type="PRINTS" id="PR00344">
    <property type="entry name" value="BCTRLSENSOR"/>
</dbReference>
<dbReference type="SMART" id="SM00387">
    <property type="entry name" value="HATPase_c"/>
    <property type="match status" value="1"/>
</dbReference>
<dbReference type="SMART" id="SM00388">
    <property type="entry name" value="HisKA"/>
    <property type="match status" value="1"/>
</dbReference>
<dbReference type="SMART" id="SM01248">
    <property type="entry name" value="KaiB"/>
    <property type="match status" value="1"/>
</dbReference>
<dbReference type="SUPFAM" id="SSF55874">
    <property type="entry name" value="ATPase domain of HSP90 chaperone/DNA topoisomerase II/histidine kinase"/>
    <property type="match status" value="1"/>
</dbReference>
<dbReference type="SUPFAM" id="SSF47384">
    <property type="entry name" value="Homodimeric domain of signal transducing histidine kinase"/>
    <property type="match status" value="1"/>
</dbReference>
<dbReference type="SUPFAM" id="SSF52833">
    <property type="entry name" value="Thioredoxin-like"/>
    <property type="match status" value="1"/>
</dbReference>
<dbReference type="PROSITE" id="PS50109">
    <property type="entry name" value="HIS_KIN"/>
    <property type="match status" value="1"/>
</dbReference>
<sequence length="382" mass="43730">MLEPPNHQTTAKTDQAASMSIQLLLFVDERPSSHEYIQPIRDYIKTVSQDCPCQLEVIEIHEQPHLVEHFRLVATPALVKVVPEPRQTLAGSNLVNQLKKWWPKWLSSLEENHHDSLLEKSSNVGYSGELMRLSDEIFRLKKDKENLQEQLKFKDQVLAMLAHDLRSPLTAASIAVETLELAKNQDPTEKQQKLTAQLFNQTRNQFRVMNRLITDILQASKSMNAQLQVHQTEVFLPRLSKEIVEQYNDLLTEKSLKLIQDVPQDVPGVYADEELIRQVIVNLIDNAIKYTSEGGEITLSILHRTSQKVQVSVCDTGPGIPEEKQERIFEGHFRLQRDQGKEGYGLGLSLCRKIIRVHYGQIWVDSVPGQGSCFHFTLPVYR</sequence>
<evidence type="ECO:0000255" key="1">
    <source>
        <dbReference type="HAMAP-Rule" id="MF_01837"/>
    </source>
</evidence>
<reference key="1">
    <citation type="journal article" date="2008" name="Proc. Natl. Acad. Sci. U.S.A.">
        <title>The genome of Cyanothece 51142, a unicellular diazotrophic cyanobacterium important in the marine nitrogen cycle.</title>
        <authorList>
            <person name="Welsh E.A."/>
            <person name="Liberton M."/>
            <person name="Stoeckel J."/>
            <person name="Loh T."/>
            <person name="Elvitigala T."/>
            <person name="Wang C."/>
            <person name="Wollam A."/>
            <person name="Fulton R.S."/>
            <person name="Clifton S.W."/>
            <person name="Jacobs J.M."/>
            <person name="Aurora R."/>
            <person name="Ghosh B.K."/>
            <person name="Sherman L.A."/>
            <person name="Smith R.D."/>
            <person name="Wilson R.K."/>
            <person name="Pakrasi H.B."/>
        </authorList>
    </citation>
    <scope>NUCLEOTIDE SEQUENCE [LARGE SCALE GENOMIC DNA]</scope>
    <source>
        <strain>ATCC 51142 / BH68</strain>
    </source>
</reference>
<keyword id="KW-0067">ATP-binding</keyword>
<keyword id="KW-0090">Biological rhythms</keyword>
<keyword id="KW-0418">Kinase</keyword>
<keyword id="KW-0547">Nucleotide-binding</keyword>
<keyword id="KW-0597">Phosphoprotein</keyword>
<keyword id="KW-1185">Reference proteome</keyword>
<keyword id="KW-0808">Transferase</keyword>
<keyword id="KW-0902">Two-component regulatory system</keyword>
<name>SASA_CROS5</name>
<organism>
    <name type="scientific">Crocosphaera subtropica (strain ATCC 51142 / BH68)</name>
    <name type="common">Cyanothece sp. (strain ATCC 51142)</name>
    <dbReference type="NCBI Taxonomy" id="43989"/>
    <lineage>
        <taxon>Bacteria</taxon>
        <taxon>Bacillati</taxon>
        <taxon>Cyanobacteriota</taxon>
        <taxon>Cyanophyceae</taxon>
        <taxon>Oscillatoriophycideae</taxon>
        <taxon>Chroococcales</taxon>
        <taxon>Aphanothecaceae</taxon>
        <taxon>Crocosphaera</taxon>
        <taxon>Crocosphaera subtropica</taxon>
    </lineage>
</organism>
<protein>
    <recommendedName>
        <fullName evidence="1">Adaptive-response sensory kinase SasA</fullName>
        <ecNumber evidence="1">2.7.13.3</ecNumber>
    </recommendedName>
    <alternativeName>
        <fullName evidence="1">Sensor histidine kinase SasA</fullName>
    </alternativeName>
</protein>
<feature type="chain" id="PRO_1000188349" description="Adaptive-response sensory kinase SasA">
    <location>
        <begin position="1"/>
        <end position="382"/>
    </location>
</feature>
<feature type="domain" description="Histidine kinase" evidence="1">
    <location>
        <begin position="160"/>
        <end position="382"/>
    </location>
</feature>
<feature type="modified residue" description="Phosphohistidine; by autocatalysis" evidence="1">
    <location>
        <position position="163"/>
    </location>
</feature>
<gene>
    <name evidence="1" type="primary">sasA</name>
    <name type="ordered locus">cce_1751</name>
</gene>
<comment type="function">
    <text evidence="1">Member of the two-component regulatory system SasA/RpaA involved in genome-wide circadian gene expression. One of several clock output pathways. Participates in the Kai clock protein complex, the main circadian regulator in cyanobacteria, via its interaction with KaiC. KaiC enhances the autophosphorylation activity of SasA, which then transfers its phosphate group to RpaA to activate it. In addition to its output function, recruits fold-shifted KaiB (KaiB(fs)) to KaiC to cooperatively form the KaiB(6):KaiC(6) complex (independent of SasA kinase activity). Required for robustness of the circadian rhythm of gene expression and is involved in clock output, also required for adaptation to light/dark cycles.</text>
</comment>
<comment type="catalytic activity">
    <reaction evidence="1">
        <text>ATP + protein L-histidine = ADP + protein N-phospho-L-histidine.</text>
        <dbReference type="EC" id="2.7.13.3"/>
    </reaction>
</comment>
<comment type="subunit">
    <text evidence="1">Homooligomerizes. Interacts with KaiC. Participates in the KaiABC clock complex, whose core is composed of a KaiC homohexamer, 6 KaiB and up to 6 KaiA dimers. SasA and KaiB(fs) compete to bind to KaiC.</text>
</comment>
<comment type="domain">
    <text evidence="1">The N-terminus interacts with KaiC, while the C-terminal histidine kinase domain autophosphorylates and is probably responsible for self-oligomerization. The N-terminal domain stimulates the C-terminus to autophosphorylate.</text>
</comment>
<proteinExistence type="inferred from homology"/>
<accession>B1WYT4</accession>